<evidence type="ECO:0000255" key="1">
    <source>
        <dbReference type="HAMAP-Rule" id="MF_00503"/>
    </source>
</evidence>
<evidence type="ECO:0000305" key="2"/>
<proteinExistence type="inferred from homology"/>
<comment type="function">
    <text evidence="1">Binds to the 23S rRNA.</text>
</comment>
<comment type="similarity">
    <text evidence="1">Belongs to the bacterial ribosomal protein bL9 family.</text>
</comment>
<reference key="1">
    <citation type="submission" date="2007-11" db="EMBL/GenBank/DDBJ databases">
        <title>Genome sequencing of phylogenetically and phenotypically diverse Coxiella burnetii isolates.</title>
        <authorList>
            <person name="Seshadri R."/>
            <person name="Samuel J.E."/>
        </authorList>
    </citation>
    <scope>NUCLEOTIDE SEQUENCE [LARGE SCALE GENOMIC DNA]</scope>
    <source>
        <strain>RSA 331 / Henzerling II</strain>
    </source>
</reference>
<name>RL9_COXBR</name>
<dbReference type="EMBL" id="CP000890">
    <property type="protein sequence ID" value="ABX78364.1"/>
    <property type="molecule type" value="Genomic_DNA"/>
</dbReference>
<dbReference type="RefSeq" id="WP_012220438.1">
    <property type="nucleotide sequence ID" value="NC_010117.1"/>
</dbReference>
<dbReference type="SMR" id="A9ND50"/>
<dbReference type="KEGG" id="cbs:COXBURSA331_A1084"/>
<dbReference type="HOGENOM" id="CLU_078938_4_1_6"/>
<dbReference type="GO" id="GO:1990904">
    <property type="term" value="C:ribonucleoprotein complex"/>
    <property type="evidence" value="ECO:0007669"/>
    <property type="project" value="UniProtKB-KW"/>
</dbReference>
<dbReference type="GO" id="GO:0005840">
    <property type="term" value="C:ribosome"/>
    <property type="evidence" value="ECO:0007669"/>
    <property type="project" value="UniProtKB-KW"/>
</dbReference>
<dbReference type="GO" id="GO:0019843">
    <property type="term" value="F:rRNA binding"/>
    <property type="evidence" value="ECO:0007669"/>
    <property type="project" value="UniProtKB-UniRule"/>
</dbReference>
<dbReference type="GO" id="GO:0003735">
    <property type="term" value="F:structural constituent of ribosome"/>
    <property type="evidence" value="ECO:0007669"/>
    <property type="project" value="InterPro"/>
</dbReference>
<dbReference type="GO" id="GO:0006412">
    <property type="term" value="P:translation"/>
    <property type="evidence" value="ECO:0007669"/>
    <property type="project" value="UniProtKB-UniRule"/>
</dbReference>
<dbReference type="Gene3D" id="3.10.430.100">
    <property type="entry name" value="Ribosomal protein L9, C-terminal domain"/>
    <property type="match status" value="1"/>
</dbReference>
<dbReference type="Gene3D" id="3.40.5.10">
    <property type="entry name" value="Ribosomal protein L9, N-terminal domain"/>
    <property type="match status" value="1"/>
</dbReference>
<dbReference type="HAMAP" id="MF_00503">
    <property type="entry name" value="Ribosomal_bL9"/>
    <property type="match status" value="1"/>
</dbReference>
<dbReference type="InterPro" id="IPR000244">
    <property type="entry name" value="Ribosomal_bL9"/>
</dbReference>
<dbReference type="InterPro" id="IPR009027">
    <property type="entry name" value="Ribosomal_bL9/RNase_H1_N"/>
</dbReference>
<dbReference type="InterPro" id="IPR020594">
    <property type="entry name" value="Ribosomal_bL9_bac/chp"/>
</dbReference>
<dbReference type="InterPro" id="IPR020069">
    <property type="entry name" value="Ribosomal_bL9_C"/>
</dbReference>
<dbReference type="InterPro" id="IPR036791">
    <property type="entry name" value="Ribosomal_bL9_C_sf"/>
</dbReference>
<dbReference type="InterPro" id="IPR020070">
    <property type="entry name" value="Ribosomal_bL9_N"/>
</dbReference>
<dbReference type="InterPro" id="IPR036935">
    <property type="entry name" value="Ribosomal_bL9_N_sf"/>
</dbReference>
<dbReference type="NCBIfam" id="TIGR00158">
    <property type="entry name" value="L9"/>
    <property type="match status" value="1"/>
</dbReference>
<dbReference type="PANTHER" id="PTHR21368">
    <property type="entry name" value="50S RIBOSOMAL PROTEIN L9"/>
    <property type="match status" value="1"/>
</dbReference>
<dbReference type="Pfam" id="PF03948">
    <property type="entry name" value="Ribosomal_L9_C"/>
    <property type="match status" value="1"/>
</dbReference>
<dbReference type="Pfam" id="PF01281">
    <property type="entry name" value="Ribosomal_L9_N"/>
    <property type="match status" value="1"/>
</dbReference>
<dbReference type="SUPFAM" id="SSF55658">
    <property type="entry name" value="L9 N-domain-like"/>
    <property type="match status" value="1"/>
</dbReference>
<dbReference type="SUPFAM" id="SSF55653">
    <property type="entry name" value="Ribosomal protein L9 C-domain"/>
    <property type="match status" value="1"/>
</dbReference>
<dbReference type="PROSITE" id="PS00651">
    <property type="entry name" value="RIBOSOMAL_L9"/>
    <property type="match status" value="1"/>
</dbReference>
<gene>
    <name evidence="1" type="primary">rplI</name>
    <name type="ordered locus">COXBURSA331_A1084</name>
</gene>
<feature type="chain" id="PRO_1000081475" description="Large ribosomal subunit protein bL9">
    <location>
        <begin position="1"/>
        <end position="152"/>
    </location>
</feature>
<sequence>MKLILQEKVANLGNIGDQVVVKPGYARNFLLPLGKAVPATPEHIAEFEKQRAELEKAAAELLAKAKARAKKLEDKSFKITANASDEGRLFGSIGPREIAQAITEAGIEIEKREVDLSQGPIRQVGEYEVPLRLHTDVSVNVKIEVAPENSNS</sequence>
<organism>
    <name type="scientific">Coxiella burnetii (strain RSA 331 / Henzerling II)</name>
    <dbReference type="NCBI Taxonomy" id="360115"/>
    <lineage>
        <taxon>Bacteria</taxon>
        <taxon>Pseudomonadati</taxon>
        <taxon>Pseudomonadota</taxon>
        <taxon>Gammaproteobacteria</taxon>
        <taxon>Legionellales</taxon>
        <taxon>Coxiellaceae</taxon>
        <taxon>Coxiella</taxon>
    </lineage>
</organism>
<protein>
    <recommendedName>
        <fullName evidence="1">Large ribosomal subunit protein bL9</fullName>
    </recommendedName>
    <alternativeName>
        <fullName evidence="2">50S ribosomal protein L9</fullName>
    </alternativeName>
</protein>
<keyword id="KW-0687">Ribonucleoprotein</keyword>
<keyword id="KW-0689">Ribosomal protein</keyword>
<keyword id="KW-0694">RNA-binding</keyword>
<keyword id="KW-0699">rRNA-binding</keyword>
<accession>A9ND50</accession>